<reference key="1">
    <citation type="journal article" date="2007" name="PLoS Genet.">
        <title>Genome analysis of Minibacterium massiliensis highlights the convergent evolution of water-living bacteria.</title>
        <authorList>
            <person name="Audic S."/>
            <person name="Robert C."/>
            <person name="Campagna B."/>
            <person name="Parinello H."/>
            <person name="Claverie J.-M."/>
            <person name="Raoult D."/>
            <person name="Drancourt M."/>
        </authorList>
    </citation>
    <scope>NUCLEOTIDE SEQUENCE [LARGE SCALE GENOMIC DNA]</scope>
    <source>
        <strain>Marseille</strain>
    </source>
</reference>
<evidence type="ECO:0000255" key="1">
    <source>
        <dbReference type="HAMAP-Rule" id="MF_00185"/>
    </source>
</evidence>
<name>MIAA_JANMA</name>
<keyword id="KW-0067">ATP-binding</keyword>
<keyword id="KW-0460">Magnesium</keyword>
<keyword id="KW-0547">Nucleotide-binding</keyword>
<keyword id="KW-0808">Transferase</keyword>
<keyword id="KW-0819">tRNA processing</keyword>
<gene>
    <name evidence="1" type="primary">miaA</name>
    <name type="ordered locus">mma_0461</name>
</gene>
<protein>
    <recommendedName>
        <fullName evidence="1">tRNA dimethylallyltransferase</fullName>
        <ecNumber evidence="1">2.5.1.75</ecNumber>
    </recommendedName>
    <alternativeName>
        <fullName evidence="1">Dimethylallyl diphosphate:tRNA dimethylallyltransferase</fullName>
        <shortName evidence="1">DMAPP:tRNA dimethylallyltransferase</shortName>
        <shortName evidence="1">DMATase</shortName>
    </alternativeName>
    <alternativeName>
        <fullName evidence="1">Isopentenyl-diphosphate:tRNA isopentenyltransferase</fullName>
        <shortName evidence="1">IPP transferase</shortName>
        <shortName evidence="1">IPPT</shortName>
        <shortName evidence="1">IPTase</shortName>
    </alternativeName>
</protein>
<feature type="chain" id="PRO_1000020608" description="tRNA dimethylallyltransferase">
    <location>
        <begin position="1"/>
        <end position="314"/>
    </location>
</feature>
<feature type="region of interest" description="Interaction with substrate tRNA" evidence="1">
    <location>
        <begin position="37"/>
        <end position="40"/>
    </location>
</feature>
<feature type="region of interest" description="Interaction with substrate tRNA" evidence="1">
    <location>
        <begin position="161"/>
        <end position="165"/>
    </location>
</feature>
<feature type="region of interest" description="Interaction with substrate tRNA" evidence="1">
    <location>
        <begin position="244"/>
        <end position="249"/>
    </location>
</feature>
<feature type="binding site" evidence="1">
    <location>
        <begin position="12"/>
        <end position="19"/>
    </location>
    <ligand>
        <name>ATP</name>
        <dbReference type="ChEBI" id="CHEBI:30616"/>
    </ligand>
</feature>
<feature type="binding site" evidence="1">
    <location>
        <begin position="14"/>
        <end position="19"/>
    </location>
    <ligand>
        <name>substrate</name>
    </ligand>
</feature>
<feature type="site" description="Interaction with substrate tRNA" evidence="1">
    <location>
        <position position="103"/>
    </location>
</feature>
<feature type="site" description="Interaction with substrate tRNA" evidence="1">
    <location>
        <position position="125"/>
    </location>
</feature>
<proteinExistence type="inferred from homology"/>
<organism>
    <name type="scientific">Janthinobacterium sp. (strain Marseille)</name>
    <name type="common">Minibacterium massiliensis</name>
    <dbReference type="NCBI Taxonomy" id="375286"/>
    <lineage>
        <taxon>Bacteria</taxon>
        <taxon>Pseudomonadati</taxon>
        <taxon>Pseudomonadota</taxon>
        <taxon>Betaproteobacteria</taxon>
        <taxon>Burkholderiales</taxon>
        <taxon>Oxalobacteraceae</taxon>
        <taxon>Janthinobacterium</taxon>
    </lineage>
</organism>
<comment type="function">
    <text evidence="1">Catalyzes the transfer of a dimethylallyl group onto the adenine at position 37 in tRNAs that read codons beginning with uridine, leading to the formation of N6-(dimethylallyl)adenosine (i(6)A).</text>
</comment>
<comment type="catalytic activity">
    <reaction evidence="1">
        <text>adenosine(37) in tRNA + dimethylallyl diphosphate = N(6)-dimethylallyladenosine(37) in tRNA + diphosphate</text>
        <dbReference type="Rhea" id="RHEA:26482"/>
        <dbReference type="Rhea" id="RHEA-COMP:10162"/>
        <dbReference type="Rhea" id="RHEA-COMP:10375"/>
        <dbReference type="ChEBI" id="CHEBI:33019"/>
        <dbReference type="ChEBI" id="CHEBI:57623"/>
        <dbReference type="ChEBI" id="CHEBI:74411"/>
        <dbReference type="ChEBI" id="CHEBI:74415"/>
        <dbReference type="EC" id="2.5.1.75"/>
    </reaction>
</comment>
<comment type="cofactor">
    <cofactor evidence="1">
        <name>Mg(2+)</name>
        <dbReference type="ChEBI" id="CHEBI:18420"/>
    </cofactor>
</comment>
<comment type="subunit">
    <text evidence="1">Monomer.</text>
</comment>
<comment type="similarity">
    <text evidence="1">Belongs to the IPP transferase family.</text>
</comment>
<accession>A6SV54</accession>
<dbReference type="EC" id="2.5.1.75" evidence="1"/>
<dbReference type="EMBL" id="CP000269">
    <property type="protein sequence ID" value="ABR88416.1"/>
    <property type="molecule type" value="Genomic_DNA"/>
</dbReference>
<dbReference type="RefSeq" id="WP_012078326.1">
    <property type="nucleotide sequence ID" value="NC_009659.1"/>
</dbReference>
<dbReference type="SMR" id="A6SV54"/>
<dbReference type="STRING" id="375286.mma_0461"/>
<dbReference type="KEGG" id="mms:mma_0461"/>
<dbReference type="eggNOG" id="COG0324">
    <property type="taxonomic scope" value="Bacteria"/>
</dbReference>
<dbReference type="HOGENOM" id="CLU_032616_0_0_4"/>
<dbReference type="OrthoDB" id="9776390at2"/>
<dbReference type="Proteomes" id="UP000006388">
    <property type="component" value="Chromosome"/>
</dbReference>
<dbReference type="GO" id="GO:0005524">
    <property type="term" value="F:ATP binding"/>
    <property type="evidence" value="ECO:0007669"/>
    <property type="project" value="UniProtKB-UniRule"/>
</dbReference>
<dbReference type="GO" id="GO:0052381">
    <property type="term" value="F:tRNA dimethylallyltransferase activity"/>
    <property type="evidence" value="ECO:0007669"/>
    <property type="project" value="UniProtKB-UniRule"/>
</dbReference>
<dbReference type="GO" id="GO:0006400">
    <property type="term" value="P:tRNA modification"/>
    <property type="evidence" value="ECO:0007669"/>
    <property type="project" value="TreeGrafter"/>
</dbReference>
<dbReference type="FunFam" id="1.10.20.140:FF:000001">
    <property type="entry name" value="tRNA dimethylallyltransferase"/>
    <property type="match status" value="1"/>
</dbReference>
<dbReference type="Gene3D" id="1.10.20.140">
    <property type="match status" value="1"/>
</dbReference>
<dbReference type="Gene3D" id="3.40.50.300">
    <property type="entry name" value="P-loop containing nucleotide triphosphate hydrolases"/>
    <property type="match status" value="1"/>
</dbReference>
<dbReference type="HAMAP" id="MF_00185">
    <property type="entry name" value="IPP_trans"/>
    <property type="match status" value="1"/>
</dbReference>
<dbReference type="InterPro" id="IPR039657">
    <property type="entry name" value="Dimethylallyltransferase"/>
</dbReference>
<dbReference type="InterPro" id="IPR018022">
    <property type="entry name" value="IPT"/>
</dbReference>
<dbReference type="InterPro" id="IPR027417">
    <property type="entry name" value="P-loop_NTPase"/>
</dbReference>
<dbReference type="NCBIfam" id="TIGR00174">
    <property type="entry name" value="miaA"/>
    <property type="match status" value="1"/>
</dbReference>
<dbReference type="PANTHER" id="PTHR11088">
    <property type="entry name" value="TRNA DIMETHYLALLYLTRANSFERASE"/>
    <property type="match status" value="1"/>
</dbReference>
<dbReference type="PANTHER" id="PTHR11088:SF60">
    <property type="entry name" value="TRNA DIMETHYLALLYLTRANSFERASE"/>
    <property type="match status" value="1"/>
</dbReference>
<dbReference type="Pfam" id="PF01715">
    <property type="entry name" value="IPPT"/>
    <property type="match status" value="1"/>
</dbReference>
<dbReference type="SUPFAM" id="SSF52540">
    <property type="entry name" value="P-loop containing nucleoside triphosphate hydrolases"/>
    <property type="match status" value="1"/>
</dbReference>
<sequence length="314" mass="33966">MSVKPLVVSIMGPTASGKTAAALAVAEKIPAEIISVDSALVYREMDIGTAKPSAEELAQVPHHLIDILDPLDSYSVMQFRQDAIRLAAEISARGKLPLLVGGTMLYFKGLKDGLDALPQADAALRAELDAEAAAIGYPAMHAKLAALDPITAERLKPNDSQRIQRALEIIALTGQPMSALLAQAPKTELPFTLLPIALEPSDRSVLHTRIATRFDAMLKGGALLDEVKALRARGDLHLGLPSMRCVGYRQSWEYLDGAYSLAELRERGIAATRQLAKRQLTWLRSMDDRHIIDCLAPDASGAILQQIEIAQNRA</sequence>